<evidence type="ECO:0000250" key="1">
    <source>
        <dbReference type="UniProtKB" id="P06996"/>
    </source>
</evidence>
<evidence type="ECO:0000255" key="2"/>
<evidence type="ECO:0000269" key="3">
    <source>
    </source>
</evidence>
<evidence type="ECO:0000305" key="4"/>
<evidence type="ECO:0000305" key="5">
    <source>
    </source>
</evidence>
<protein>
    <recommendedName>
        <fullName evidence="4">Outer membrane porin C 2</fullName>
    </recommendedName>
    <alternativeName>
        <fullName>Outer membrane protein C 2</fullName>
    </alternativeName>
    <alternativeName>
        <fullName>Porin OmpC2</fullName>
    </alternativeName>
</protein>
<sequence>MKLKIVAVVVTGLLAANVAHAAEVYNKDGNKLDLYGKVTALRYFTDDKRDDGDKTYARLGFKGGTQINDQMIGFGHWEYDFKGYNDEANGSRGNKTRLAYAGLKISEFGSLDYGRNYGVGYDIGSWTDMLPEFGGDTWSQKDVFMTYRTTGLATYRNYDFFGLIEGLNFAAQYQGKNERTDNSHLYGADYTRANGDGFGISSTYVYDGFGIGAVYTKSDRTNAQERAAANPLNASGKNAELWATGIKYDANNIYFAANYDETLNMTTYGDGYISNKAQSFEVVAQYQFDFGLRPSLAYLKSKGRDLGRYADQDMIEYIDVGATYFFNKNMSTYVDYKINLIDESDFTRAVDIRTDNIVATGITYQF</sequence>
<dbReference type="EMBL" id="CP037923">
    <property type="protein sequence ID" value="QCC31501.1"/>
    <property type="molecule type" value="Genomic_DNA"/>
</dbReference>
<dbReference type="RefSeq" id="WP_000768403.1">
    <property type="nucleotide sequence ID" value="NZ_CM001474.1"/>
</dbReference>
<dbReference type="SMR" id="A0A4P7TME1"/>
<dbReference type="Proteomes" id="UP000296678">
    <property type="component" value="Chromosome"/>
</dbReference>
<dbReference type="GO" id="GO:0009279">
    <property type="term" value="C:cell outer membrane"/>
    <property type="evidence" value="ECO:0007669"/>
    <property type="project" value="UniProtKB-SubCell"/>
</dbReference>
<dbReference type="GO" id="GO:0046930">
    <property type="term" value="C:pore complex"/>
    <property type="evidence" value="ECO:0007669"/>
    <property type="project" value="UniProtKB-KW"/>
</dbReference>
<dbReference type="GO" id="GO:0015288">
    <property type="term" value="F:porin activity"/>
    <property type="evidence" value="ECO:0007669"/>
    <property type="project" value="UniProtKB-KW"/>
</dbReference>
<dbReference type="GO" id="GO:0034220">
    <property type="term" value="P:monoatomic ion transmembrane transport"/>
    <property type="evidence" value="ECO:0007669"/>
    <property type="project" value="InterPro"/>
</dbReference>
<dbReference type="CDD" id="cd00342">
    <property type="entry name" value="gram_neg_porins"/>
    <property type="match status" value="1"/>
</dbReference>
<dbReference type="Gene3D" id="2.40.160.10">
    <property type="entry name" value="Porin"/>
    <property type="match status" value="1"/>
</dbReference>
<dbReference type="InterPro" id="IPR050298">
    <property type="entry name" value="Gram-neg_bact_OMP"/>
</dbReference>
<dbReference type="InterPro" id="IPR033900">
    <property type="entry name" value="Gram_neg_porin_domain"/>
</dbReference>
<dbReference type="InterPro" id="IPR023614">
    <property type="entry name" value="Porin_dom_sf"/>
</dbReference>
<dbReference type="InterPro" id="IPR001897">
    <property type="entry name" value="Porin_gammaproteobac"/>
</dbReference>
<dbReference type="InterPro" id="IPR001702">
    <property type="entry name" value="Porin_Gram-ve"/>
</dbReference>
<dbReference type="InterPro" id="IPR013793">
    <property type="entry name" value="Porin_Gram-ve_CS"/>
</dbReference>
<dbReference type="NCBIfam" id="NF007841">
    <property type="entry name" value="PRK10554.1"/>
    <property type="match status" value="1"/>
</dbReference>
<dbReference type="PANTHER" id="PTHR34501:SF2">
    <property type="entry name" value="OUTER MEMBRANE PORIN F-RELATED"/>
    <property type="match status" value="1"/>
</dbReference>
<dbReference type="PANTHER" id="PTHR34501">
    <property type="entry name" value="PROTEIN YDDL-RELATED"/>
    <property type="match status" value="1"/>
</dbReference>
<dbReference type="Pfam" id="PF00267">
    <property type="entry name" value="Porin_1"/>
    <property type="match status" value="1"/>
</dbReference>
<dbReference type="PRINTS" id="PR00183">
    <property type="entry name" value="ECOLIPORIN"/>
</dbReference>
<dbReference type="PRINTS" id="PR00182">
    <property type="entry name" value="ECOLNEIPORIN"/>
</dbReference>
<dbReference type="SUPFAM" id="SSF56935">
    <property type="entry name" value="Porins"/>
    <property type="match status" value="1"/>
</dbReference>
<dbReference type="PROSITE" id="PS00576">
    <property type="entry name" value="GRAM_NEG_PORIN"/>
    <property type="match status" value="1"/>
</dbReference>
<comment type="function">
    <text evidence="3 4">Forms pores that allow passive diffusion of small molecules across the outer membrane (Probable). Plays a role in virulence (PubMed:8359885).</text>
</comment>
<comment type="subunit">
    <text evidence="1">Homotrimer. Forms mixed heterotrimers with OmpF and with PhoE; other mixed heterotrimers are also probable.</text>
</comment>
<comment type="subcellular location">
    <subcellularLocation>
        <location evidence="3">Cell outer membrane</location>
        <topology evidence="1">Multi-pass membrane protein</topology>
    </subcellularLocation>
</comment>
<comment type="induction">
    <text evidence="3">Unlike E.coli, constitutively expressed at low and high osmolarity (0.3M NaCl) (at protein level). Expression is under the control of OmpR-EnvZ two-component system; still expressed at very low levels in high osmolarity in the absence of ompR-envZ (at protein elevel).</text>
</comment>
<comment type="disruption phenotype">
    <text evidence="3">Lowered rate of infection of HeLa cells. Bacteria are seriously impaired in their ability to spread from host cell to host cell.</text>
</comment>
<comment type="miscellaneous">
    <text evidence="5">This strain has 2 ompC genes; it is not clear which one has been detected in cell outer membranes nor deleted in PubMed:8359885.</text>
</comment>
<comment type="similarity">
    <text evidence="4">Belongs to the Gram-negative porin family.</text>
</comment>
<gene>
    <name evidence="4" type="primary">ompC2</name>
    <name type="ORF">EKN05_007325</name>
</gene>
<name>OMPC2_SHIFM</name>
<organism>
    <name type="scientific">Shigella flexneri serotype 5a (strain M90T)</name>
    <dbReference type="NCBI Taxonomy" id="1086030"/>
    <lineage>
        <taxon>Bacteria</taxon>
        <taxon>Pseudomonadati</taxon>
        <taxon>Pseudomonadota</taxon>
        <taxon>Gammaproteobacteria</taxon>
        <taxon>Enterobacterales</taxon>
        <taxon>Enterobacteriaceae</taxon>
        <taxon>Shigella</taxon>
    </lineage>
</organism>
<feature type="signal peptide" evidence="2">
    <location>
        <begin position="1"/>
        <end position="21"/>
    </location>
</feature>
<feature type="chain" id="PRO_5020959323" description="Outer membrane porin C 2" evidence="2">
    <location>
        <begin position="22"/>
        <end position="366"/>
    </location>
</feature>
<proteinExistence type="evidence at protein level"/>
<keyword id="KW-0998">Cell outer membrane</keyword>
<keyword id="KW-0406">Ion transport</keyword>
<keyword id="KW-0472">Membrane</keyword>
<keyword id="KW-0626">Porin</keyword>
<keyword id="KW-0732">Signal</keyword>
<keyword id="KW-0812">Transmembrane</keyword>
<keyword id="KW-1134">Transmembrane beta strand</keyword>
<keyword id="KW-0813">Transport</keyword>
<keyword id="KW-0843">Virulence</keyword>
<reference key="1">
    <citation type="submission" date="2019-03" db="EMBL/GenBank/DDBJ databases">
        <title>Complete genome sequence and annotation of the laboratory reference strain Shigella flexneri 5a M90T and genome-wide transcription start site determination.</title>
        <authorList>
            <person name="Cervantes-Rivera R."/>
            <person name="Puhar A."/>
        </authorList>
    </citation>
    <scope>NUCLEOTIDE SEQUENCE [LARGE SCALE GENOMIC DNA]</scope>
    <source>
        <strain>M90T / Serotype 5a</strain>
    </source>
</reference>
<reference key="2">
    <citation type="journal article" date="1993" name="Infect. Immun.">
        <title>OmpC is involved in invasion of epithelial cells by Shigella flexneri.</title>
        <authorList>
            <person name="Bernardini M.L."/>
            <person name="Sanna M.G."/>
            <person name="Fontaine A."/>
            <person name="Sansonetti P.J."/>
        </authorList>
    </citation>
    <scope>FUNCTION IN VIRULENCE</scope>
    <scope>SUBCELLULAR LOCATION</scope>
    <scope>INDUCTION</scope>
    <scope>DISRUPTION PHENOTYPE</scope>
    <source>
        <strain>M90T / Serotype 5a</strain>
    </source>
</reference>
<accession>A0A4P7TME1</accession>